<organism>
    <name type="scientific">Francisella tularensis subsp. tularensis (strain WY96-3418)</name>
    <dbReference type="NCBI Taxonomy" id="418136"/>
    <lineage>
        <taxon>Bacteria</taxon>
        <taxon>Pseudomonadati</taxon>
        <taxon>Pseudomonadota</taxon>
        <taxon>Gammaproteobacteria</taxon>
        <taxon>Thiotrichales</taxon>
        <taxon>Francisellaceae</taxon>
        <taxon>Francisella</taxon>
    </lineage>
</organism>
<feature type="chain" id="PRO_1000019029" description="1-deoxy-D-xylulose-5-phosphate synthase">
    <location>
        <begin position="1"/>
        <end position="615"/>
    </location>
</feature>
<feature type="binding site" evidence="1">
    <location>
        <position position="76"/>
    </location>
    <ligand>
        <name>thiamine diphosphate</name>
        <dbReference type="ChEBI" id="CHEBI:58937"/>
    </ligand>
</feature>
<feature type="binding site" evidence="1">
    <location>
        <begin position="117"/>
        <end position="119"/>
    </location>
    <ligand>
        <name>thiamine diphosphate</name>
        <dbReference type="ChEBI" id="CHEBI:58937"/>
    </ligand>
</feature>
<feature type="binding site" evidence="1">
    <location>
        <position position="148"/>
    </location>
    <ligand>
        <name>Mg(2+)</name>
        <dbReference type="ChEBI" id="CHEBI:18420"/>
    </ligand>
</feature>
<feature type="binding site" evidence="1">
    <location>
        <begin position="149"/>
        <end position="150"/>
    </location>
    <ligand>
        <name>thiamine diphosphate</name>
        <dbReference type="ChEBI" id="CHEBI:58937"/>
    </ligand>
</feature>
<feature type="binding site" evidence="1">
    <location>
        <position position="177"/>
    </location>
    <ligand>
        <name>Mg(2+)</name>
        <dbReference type="ChEBI" id="CHEBI:18420"/>
    </ligand>
</feature>
<feature type="binding site" evidence="1">
    <location>
        <position position="177"/>
    </location>
    <ligand>
        <name>thiamine diphosphate</name>
        <dbReference type="ChEBI" id="CHEBI:58937"/>
    </ligand>
</feature>
<feature type="binding site" evidence="1">
    <location>
        <position position="284"/>
    </location>
    <ligand>
        <name>thiamine diphosphate</name>
        <dbReference type="ChEBI" id="CHEBI:58937"/>
    </ligand>
</feature>
<feature type="binding site" evidence="1">
    <location>
        <position position="365"/>
    </location>
    <ligand>
        <name>thiamine diphosphate</name>
        <dbReference type="ChEBI" id="CHEBI:58937"/>
    </ligand>
</feature>
<dbReference type="EC" id="2.2.1.7" evidence="1"/>
<dbReference type="EMBL" id="CP000608">
    <property type="protein sequence ID" value="ABO46766.1"/>
    <property type="molecule type" value="Genomic_DNA"/>
</dbReference>
<dbReference type="RefSeq" id="WP_003021112.1">
    <property type="nucleotide sequence ID" value="NC_009257.1"/>
</dbReference>
<dbReference type="SMR" id="A4IXW5"/>
<dbReference type="KEGG" id="ftw:FTW_0925"/>
<dbReference type="HOGENOM" id="CLU_009227_1_4_6"/>
<dbReference type="UniPathway" id="UPA00064">
    <property type="reaction ID" value="UER00091"/>
</dbReference>
<dbReference type="GO" id="GO:0005829">
    <property type="term" value="C:cytosol"/>
    <property type="evidence" value="ECO:0007669"/>
    <property type="project" value="TreeGrafter"/>
</dbReference>
<dbReference type="GO" id="GO:0008661">
    <property type="term" value="F:1-deoxy-D-xylulose-5-phosphate synthase activity"/>
    <property type="evidence" value="ECO:0007669"/>
    <property type="project" value="UniProtKB-UniRule"/>
</dbReference>
<dbReference type="GO" id="GO:0000287">
    <property type="term" value="F:magnesium ion binding"/>
    <property type="evidence" value="ECO:0007669"/>
    <property type="project" value="UniProtKB-UniRule"/>
</dbReference>
<dbReference type="GO" id="GO:0030976">
    <property type="term" value="F:thiamine pyrophosphate binding"/>
    <property type="evidence" value="ECO:0007669"/>
    <property type="project" value="UniProtKB-UniRule"/>
</dbReference>
<dbReference type="GO" id="GO:0052865">
    <property type="term" value="P:1-deoxy-D-xylulose 5-phosphate biosynthetic process"/>
    <property type="evidence" value="ECO:0007669"/>
    <property type="project" value="UniProtKB-UniPathway"/>
</dbReference>
<dbReference type="GO" id="GO:0019288">
    <property type="term" value="P:isopentenyl diphosphate biosynthetic process, methylerythritol 4-phosphate pathway"/>
    <property type="evidence" value="ECO:0007669"/>
    <property type="project" value="TreeGrafter"/>
</dbReference>
<dbReference type="GO" id="GO:0016114">
    <property type="term" value="P:terpenoid biosynthetic process"/>
    <property type="evidence" value="ECO:0007669"/>
    <property type="project" value="UniProtKB-UniRule"/>
</dbReference>
<dbReference type="GO" id="GO:0009228">
    <property type="term" value="P:thiamine biosynthetic process"/>
    <property type="evidence" value="ECO:0007669"/>
    <property type="project" value="UniProtKB-UniRule"/>
</dbReference>
<dbReference type="CDD" id="cd02007">
    <property type="entry name" value="TPP_DXS"/>
    <property type="match status" value="1"/>
</dbReference>
<dbReference type="CDD" id="cd07033">
    <property type="entry name" value="TPP_PYR_DXS_TK_like"/>
    <property type="match status" value="1"/>
</dbReference>
<dbReference type="FunFam" id="3.40.50.970:FF:000005">
    <property type="entry name" value="1-deoxy-D-xylulose-5-phosphate synthase"/>
    <property type="match status" value="1"/>
</dbReference>
<dbReference type="Gene3D" id="3.40.50.920">
    <property type="match status" value="1"/>
</dbReference>
<dbReference type="Gene3D" id="3.40.50.970">
    <property type="match status" value="2"/>
</dbReference>
<dbReference type="HAMAP" id="MF_00315">
    <property type="entry name" value="DXP_synth"/>
    <property type="match status" value="1"/>
</dbReference>
<dbReference type="InterPro" id="IPR005477">
    <property type="entry name" value="Dxylulose-5-P_synthase"/>
</dbReference>
<dbReference type="InterPro" id="IPR029061">
    <property type="entry name" value="THDP-binding"/>
</dbReference>
<dbReference type="InterPro" id="IPR009014">
    <property type="entry name" value="Transketo_C/PFOR_II"/>
</dbReference>
<dbReference type="InterPro" id="IPR005475">
    <property type="entry name" value="Transketolase-like_Pyr-bd"/>
</dbReference>
<dbReference type="InterPro" id="IPR020826">
    <property type="entry name" value="Transketolase_BS"/>
</dbReference>
<dbReference type="InterPro" id="IPR033248">
    <property type="entry name" value="Transketolase_C"/>
</dbReference>
<dbReference type="InterPro" id="IPR049557">
    <property type="entry name" value="Transketolase_CS"/>
</dbReference>
<dbReference type="NCBIfam" id="TIGR00204">
    <property type="entry name" value="dxs"/>
    <property type="match status" value="1"/>
</dbReference>
<dbReference type="NCBIfam" id="NF003933">
    <property type="entry name" value="PRK05444.2-2"/>
    <property type="match status" value="1"/>
</dbReference>
<dbReference type="PANTHER" id="PTHR43322">
    <property type="entry name" value="1-D-DEOXYXYLULOSE 5-PHOSPHATE SYNTHASE-RELATED"/>
    <property type="match status" value="1"/>
</dbReference>
<dbReference type="PANTHER" id="PTHR43322:SF5">
    <property type="entry name" value="1-DEOXY-D-XYLULOSE-5-PHOSPHATE SYNTHASE, CHLOROPLASTIC"/>
    <property type="match status" value="1"/>
</dbReference>
<dbReference type="Pfam" id="PF13292">
    <property type="entry name" value="DXP_synthase_N"/>
    <property type="match status" value="1"/>
</dbReference>
<dbReference type="Pfam" id="PF02779">
    <property type="entry name" value="Transket_pyr"/>
    <property type="match status" value="1"/>
</dbReference>
<dbReference type="Pfam" id="PF02780">
    <property type="entry name" value="Transketolase_C"/>
    <property type="match status" value="1"/>
</dbReference>
<dbReference type="SMART" id="SM00861">
    <property type="entry name" value="Transket_pyr"/>
    <property type="match status" value="1"/>
</dbReference>
<dbReference type="SUPFAM" id="SSF52518">
    <property type="entry name" value="Thiamin diphosphate-binding fold (THDP-binding)"/>
    <property type="match status" value="2"/>
</dbReference>
<dbReference type="SUPFAM" id="SSF52922">
    <property type="entry name" value="TK C-terminal domain-like"/>
    <property type="match status" value="1"/>
</dbReference>
<dbReference type="PROSITE" id="PS00801">
    <property type="entry name" value="TRANSKETOLASE_1"/>
    <property type="match status" value="1"/>
</dbReference>
<dbReference type="PROSITE" id="PS00802">
    <property type="entry name" value="TRANSKETOLASE_2"/>
    <property type="match status" value="1"/>
</dbReference>
<evidence type="ECO:0000255" key="1">
    <source>
        <dbReference type="HAMAP-Rule" id="MF_00315"/>
    </source>
</evidence>
<proteinExistence type="inferred from homology"/>
<accession>A4IXW5</accession>
<name>DXS_FRATW</name>
<sequence>MSKYTILDKINTPSDLKLIPESQLKILSAELRAFLVDTLDVSGGHFASSLGATELTVALHYVYNAPYDNIVWDVGHQTYIHKILTGRKDKLVTIKKDGGISGFPKRSESEYDTFGVGHSSTSISAALGMAIADRLQGKSSNTVAVIGDGAITGGMAFEALNHAGGIKEDILVILNDNEMSISDNVGGLSAHFSKIISGGFYNSIREKGKEVLKNIPPIFEFVKKVETQTKGMFVPANFFEDLGFYYVGPIDGHDVTELVKTLRILKDHKGPKLLHVITKKGKGYTKAESDPIKFHHVAPSFHSGENITTKISKPTYSNIFGDWICQKAAKDKRLVGITPAMKEGSDLIRFSQLYPHRYFDVAIAEQHAVTFAGGLACQGLKPVVAIYSTFLQRAYDQVIHDIALQNLDVLYAVDRAGLVGADGATHDGSFDLAFMRCIPNHVIMTPSDENEAYHMLEFGYEYNGPAMVRYPRGAGIGAEITGSLDLELGKAKIVKQGSKIAILNFGTLLPLAKQLAEKYHATVIDMRFVKPLDEIMLDKVSQTHEIILTLEENCIAGGAGSAVNEYFVAKDLSNKIIVRNFGLQDKFLNHGTKDLLLAQSKLCVENISQELDKLI</sequence>
<reference key="1">
    <citation type="journal article" date="2007" name="PLoS ONE">
        <title>Complete genomic characterization of a pathogenic A.II strain of Francisella tularensis subspecies tularensis.</title>
        <authorList>
            <person name="Beckstrom-Sternberg S.M."/>
            <person name="Auerbach R.K."/>
            <person name="Godbole S."/>
            <person name="Pearson J.V."/>
            <person name="Beckstrom-Sternberg J.S."/>
            <person name="Deng Z."/>
            <person name="Munk C."/>
            <person name="Kubota K."/>
            <person name="Zhou Y."/>
            <person name="Bruce D."/>
            <person name="Noronha J."/>
            <person name="Scheuermann R.H."/>
            <person name="Wang A."/>
            <person name="Wei X."/>
            <person name="Wang J."/>
            <person name="Hao J."/>
            <person name="Wagner D.M."/>
            <person name="Brettin T.S."/>
            <person name="Brown N."/>
            <person name="Gilna P."/>
            <person name="Keim P.S."/>
        </authorList>
    </citation>
    <scope>NUCLEOTIDE SEQUENCE [LARGE SCALE GENOMIC DNA]</scope>
    <source>
        <strain>WY96-3418</strain>
    </source>
</reference>
<gene>
    <name evidence="1" type="primary">dxs</name>
    <name type="ordered locus">FTW_0925</name>
</gene>
<comment type="function">
    <text evidence="1">Catalyzes the acyloin condensation reaction between C atoms 2 and 3 of pyruvate and glyceraldehyde 3-phosphate to yield 1-deoxy-D-xylulose-5-phosphate (DXP).</text>
</comment>
<comment type="catalytic activity">
    <reaction evidence="1">
        <text>D-glyceraldehyde 3-phosphate + pyruvate + H(+) = 1-deoxy-D-xylulose 5-phosphate + CO2</text>
        <dbReference type="Rhea" id="RHEA:12605"/>
        <dbReference type="ChEBI" id="CHEBI:15361"/>
        <dbReference type="ChEBI" id="CHEBI:15378"/>
        <dbReference type="ChEBI" id="CHEBI:16526"/>
        <dbReference type="ChEBI" id="CHEBI:57792"/>
        <dbReference type="ChEBI" id="CHEBI:59776"/>
        <dbReference type="EC" id="2.2.1.7"/>
    </reaction>
</comment>
<comment type="cofactor">
    <cofactor evidence="1">
        <name>Mg(2+)</name>
        <dbReference type="ChEBI" id="CHEBI:18420"/>
    </cofactor>
    <text evidence="1">Binds 1 Mg(2+) ion per subunit.</text>
</comment>
<comment type="cofactor">
    <cofactor evidence="1">
        <name>thiamine diphosphate</name>
        <dbReference type="ChEBI" id="CHEBI:58937"/>
    </cofactor>
    <text evidence="1">Binds 1 thiamine pyrophosphate per subunit.</text>
</comment>
<comment type="pathway">
    <text evidence="1">Metabolic intermediate biosynthesis; 1-deoxy-D-xylulose 5-phosphate biosynthesis; 1-deoxy-D-xylulose 5-phosphate from D-glyceraldehyde 3-phosphate and pyruvate: step 1/1.</text>
</comment>
<comment type="subunit">
    <text evidence="1">Homodimer.</text>
</comment>
<comment type="similarity">
    <text evidence="1">Belongs to the transketolase family. DXPS subfamily.</text>
</comment>
<keyword id="KW-0414">Isoprene biosynthesis</keyword>
<keyword id="KW-0460">Magnesium</keyword>
<keyword id="KW-0479">Metal-binding</keyword>
<keyword id="KW-0784">Thiamine biosynthesis</keyword>
<keyword id="KW-0786">Thiamine pyrophosphate</keyword>
<keyword id="KW-0808">Transferase</keyword>
<protein>
    <recommendedName>
        <fullName evidence="1">1-deoxy-D-xylulose-5-phosphate synthase</fullName>
        <ecNumber evidence="1">2.2.1.7</ecNumber>
    </recommendedName>
    <alternativeName>
        <fullName evidence="1">1-deoxyxylulose-5-phosphate synthase</fullName>
        <shortName evidence="1">DXP synthase</shortName>
        <shortName evidence="1">DXPS</shortName>
    </alternativeName>
</protein>